<keyword id="KW-1003">Cell membrane</keyword>
<keyword id="KW-0963">Cytoplasm</keyword>
<keyword id="KW-0206">Cytoskeleton</keyword>
<keyword id="KW-0472">Membrane</keyword>
<keyword id="KW-1185">Reference proteome</keyword>
<organism>
    <name type="scientific">Danio rerio</name>
    <name type="common">Zebrafish</name>
    <name type="synonym">Brachydanio rerio</name>
    <dbReference type="NCBI Taxonomy" id="7955"/>
    <lineage>
        <taxon>Eukaryota</taxon>
        <taxon>Metazoa</taxon>
        <taxon>Chordata</taxon>
        <taxon>Craniata</taxon>
        <taxon>Vertebrata</taxon>
        <taxon>Euteleostomi</taxon>
        <taxon>Actinopterygii</taxon>
        <taxon>Neopterygii</taxon>
        <taxon>Teleostei</taxon>
        <taxon>Ostariophysi</taxon>
        <taxon>Cypriniformes</taxon>
        <taxon>Danionidae</taxon>
        <taxon>Danioninae</taxon>
        <taxon>Danio</taxon>
    </lineage>
</organism>
<name>AB1IP_DANRE</name>
<accession>Q6PFT9</accession>
<comment type="function">
    <text>Appears to function in the signal transduction from Ras activation to actin cytoskeletal remodeling.</text>
</comment>
<comment type="subcellular location">
    <subcellularLocation>
        <location evidence="1">Cell membrane</location>
        <topology evidence="1">Peripheral membrane protein</topology>
        <orientation evidence="1">Cytoplasmic side</orientation>
    </subcellularLocation>
    <subcellularLocation>
        <location evidence="1">Cytoplasm</location>
        <location evidence="1">Cytoskeleton</location>
    </subcellularLocation>
</comment>
<comment type="similarity">
    <text evidence="5">Belongs to the MRL family.</text>
</comment>
<evidence type="ECO:0000250" key="1"/>
<evidence type="ECO:0000255" key="2">
    <source>
        <dbReference type="PROSITE-ProRule" id="PRU00145"/>
    </source>
</evidence>
<evidence type="ECO:0000255" key="3">
    <source>
        <dbReference type="PROSITE-ProRule" id="PRU00166"/>
    </source>
</evidence>
<evidence type="ECO:0000256" key="4">
    <source>
        <dbReference type="SAM" id="MobiDB-lite"/>
    </source>
</evidence>
<evidence type="ECO:0000305" key="5"/>
<feature type="chain" id="PRO_0000181350" description="Amyloid beta A4 precursor protein-binding family B member 1-interacting protein">
    <location>
        <begin position="1"/>
        <end position="646"/>
    </location>
</feature>
<feature type="domain" description="Ras-associating" evidence="3">
    <location>
        <begin position="162"/>
        <end position="248"/>
    </location>
</feature>
<feature type="domain" description="PH" evidence="2">
    <location>
        <begin position="292"/>
        <end position="401"/>
    </location>
</feature>
<feature type="region of interest" description="Disordered" evidence="4">
    <location>
        <begin position="82"/>
        <end position="141"/>
    </location>
</feature>
<feature type="region of interest" description="Disordered" evidence="4">
    <location>
        <begin position="420"/>
        <end position="646"/>
    </location>
</feature>
<feature type="compositionally biased region" description="Polar residues" evidence="4">
    <location>
        <begin position="101"/>
        <end position="116"/>
    </location>
</feature>
<feature type="compositionally biased region" description="Low complexity" evidence="4">
    <location>
        <begin position="429"/>
        <end position="445"/>
    </location>
</feature>
<feature type="compositionally biased region" description="Pro residues" evidence="4">
    <location>
        <begin position="465"/>
        <end position="500"/>
    </location>
</feature>
<feature type="compositionally biased region" description="Pro residues" evidence="4">
    <location>
        <begin position="509"/>
        <end position="536"/>
    </location>
</feature>
<feature type="compositionally biased region" description="Pro residues" evidence="4">
    <location>
        <begin position="560"/>
        <end position="577"/>
    </location>
</feature>
<feature type="compositionally biased region" description="Pro residues" evidence="4">
    <location>
        <begin position="584"/>
        <end position="598"/>
    </location>
</feature>
<reference key="1">
    <citation type="submission" date="2003-09" db="EMBL/GenBank/DDBJ databases">
        <authorList>
            <consortium name="NIH - Zebrafish Gene Collection (ZGC) project"/>
        </authorList>
    </citation>
    <scope>NUCLEOTIDE SEQUENCE [LARGE SCALE MRNA]</scope>
    <source>
        <tissue>Kidney</tissue>
    </source>
</reference>
<proteinExistence type="evidence at transcript level"/>
<protein>
    <recommendedName>
        <fullName>Amyloid beta A4 precursor protein-binding family B member 1-interacting protein</fullName>
    </recommendedName>
    <alternativeName>
        <fullName>APBB1-interacting protein 1</fullName>
    </alternativeName>
</protein>
<dbReference type="EMBL" id="BC057421">
    <property type="protein sequence ID" value="AAH57421.1"/>
    <property type="molecule type" value="mRNA"/>
</dbReference>
<dbReference type="RefSeq" id="NP_956928.1">
    <property type="nucleotide sequence ID" value="NM_200634.1"/>
</dbReference>
<dbReference type="SMR" id="Q6PFT9"/>
<dbReference type="FunCoup" id="Q6PFT9">
    <property type="interactions" value="1018"/>
</dbReference>
<dbReference type="STRING" id="7955.ENSDARP00000117778"/>
<dbReference type="PaxDb" id="7955-ENSDARP00000117778"/>
<dbReference type="GeneID" id="393607"/>
<dbReference type="KEGG" id="dre:393607"/>
<dbReference type="AGR" id="ZFIN:ZDB-GENE-040426-1318"/>
<dbReference type="CTD" id="54518"/>
<dbReference type="ZFIN" id="ZDB-GENE-040426-1318">
    <property type="gene designation" value="apbb1ip"/>
</dbReference>
<dbReference type="eggNOG" id="KOG3751">
    <property type="taxonomic scope" value="Eukaryota"/>
</dbReference>
<dbReference type="InParanoid" id="Q6PFT9"/>
<dbReference type="OrthoDB" id="6235964at2759"/>
<dbReference type="PhylomeDB" id="Q6PFT9"/>
<dbReference type="Reactome" id="R-DRE-354192">
    <property type="pathway name" value="Integrin signaling"/>
</dbReference>
<dbReference type="PRO" id="PR:Q6PFT9"/>
<dbReference type="Proteomes" id="UP000000437">
    <property type="component" value="Chromosome 24"/>
</dbReference>
<dbReference type="GO" id="GO:0005856">
    <property type="term" value="C:cytoskeleton"/>
    <property type="evidence" value="ECO:0007669"/>
    <property type="project" value="UniProtKB-SubCell"/>
</dbReference>
<dbReference type="GO" id="GO:0005829">
    <property type="term" value="C:cytosol"/>
    <property type="evidence" value="ECO:0000318"/>
    <property type="project" value="GO_Central"/>
</dbReference>
<dbReference type="GO" id="GO:0005886">
    <property type="term" value="C:plasma membrane"/>
    <property type="evidence" value="ECO:0000318"/>
    <property type="project" value="GO_Central"/>
</dbReference>
<dbReference type="GO" id="GO:0007165">
    <property type="term" value="P:signal transduction"/>
    <property type="evidence" value="ECO:0007669"/>
    <property type="project" value="InterPro"/>
</dbReference>
<dbReference type="CDD" id="cd01259">
    <property type="entry name" value="PH_APBB1IP"/>
    <property type="match status" value="1"/>
</dbReference>
<dbReference type="CDD" id="cd16137">
    <property type="entry name" value="RA_MRL_RIAM"/>
    <property type="match status" value="1"/>
</dbReference>
<dbReference type="FunFam" id="2.30.29.30:FF:000048">
    <property type="entry name" value="Ras association (RalGDS/AF-6) and pleckstrin homology domains 1"/>
    <property type="match status" value="1"/>
</dbReference>
<dbReference type="Gene3D" id="3.10.20.90">
    <property type="entry name" value="Phosphatidylinositol 3-kinase Catalytic Subunit, Chain A, domain 1"/>
    <property type="match status" value="1"/>
</dbReference>
<dbReference type="Gene3D" id="2.30.29.30">
    <property type="entry name" value="Pleckstrin-homology domain (PH domain)/Phosphotyrosine-binding domain (PTB)"/>
    <property type="match status" value="1"/>
</dbReference>
<dbReference type="InterPro" id="IPR039664">
    <property type="entry name" value="GRB/APBB1IP"/>
</dbReference>
<dbReference type="InterPro" id="IPR011993">
    <property type="entry name" value="PH-like_dom_sf"/>
</dbReference>
<dbReference type="InterPro" id="IPR039665">
    <property type="entry name" value="PH_APBB1IP"/>
</dbReference>
<dbReference type="InterPro" id="IPR001849">
    <property type="entry name" value="PH_domain"/>
</dbReference>
<dbReference type="InterPro" id="IPR000159">
    <property type="entry name" value="RA_dom"/>
</dbReference>
<dbReference type="InterPro" id="IPR029071">
    <property type="entry name" value="Ubiquitin-like_domsf"/>
</dbReference>
<dbReference type="PANTHER" id="PTHR11243:SF14">
    <property type="entry name" value="AMYLOID BETA A4 PRECURSOR PROTEIN-BINDING FAMILY B MEMBER 1-INTERACTING PROTEIN"/>
    <property type="match status" value="1"/>
</dbReference>
<dbReference type="PANTHER" id="PTHR11243">
    <property type="entry name" value="GROWTH FACTOR RECEPTOR-BOUND PROTEIN"/>
    <property type="match status" value="1"/>
</dbReference>
<dbReference type="Pfam" id="PF00169">
    <property type="entry name" value="PH"/>
    <property type="match status" value="1"/>
</dbReference>
<dbReference type="Pfam" id="PF21989">
    <property type="entry name" value="RA_2"/>
    <property type="match status" value="1"/>
</dbReference>
<dbReference type="SMART" id="SM00233">
    <property type="entry name" value="PH"/>
    <property type="match status" value="1"/>
</dbReference>
<dbReference type="SMART" id="SM00314">
    <property type="entry name" value="RA"/>
    <property type="match status" value="1"/>
</dbReference>
<dbReference type="SUPFAM" id="SSF50729">
    <property type="entry name" value="PH domain-like"/>
    <property type="match status" value="1"/>
</dbReference>
<dbReference type="SUPFAM" id="SSF54236">
    <property type="entry name" value="Ubiquitin-like"/>
    <property type="match status" value="1"/>
</dbReference>
<dbReference type="PROSITE" id="PS50003">
    <property type="entry name" value="PH_DOMAIN"/>
    <property type="match status" value="1"/>
</dbReference>
<dbReference type="PROSITE" id="PS50200">
    <property type="entry name" value="RA"/>
    <property type="match status" value="1"/>
</dbReference>
<sequence length="646" mass="71002">MDDIDAMFSDMLQEMDLLTQSLDAEVDSAPLAKPPTIPEPQEMNFSIGFANFNESLNDLEDNDLDALMADLVADISATEEKFATERDTSKGSVPVAPAPSKPQSNFSLPASFDSSKPATSSNSIAAPPPPPAFKPSKEEEEEQLKADKIKLALEKLKEAKVKKLVVKVEITDGSSKTLMVDERQTVRDVMDNLFEKTHCDCNVDWSVCETNPDLQTERAFEDHENLVEPLSTWTRDTENKVLFQEKKHKYEVFKNPQIFYLWKKDKKSLKDMKEKDKEQLLEENFCGASVIVPDLEGVLYLKEDGKKSWKQRYFLLRASGLYYSPKGKTKASRDLVCLVQFDNVNVYYCKEYRIKYKAPTDHCFMLKHPQIQKESQYIKFMCCDDEWSMNLWVTGIRVAKYGKQLYDNYKAAVRKASGSASWANRTIQASSTASTPSPTPKAKAANGHAPQPPVENKVPSNQSSLPPPPPSMDFLPPPPPDPMFPPPPPAPPAPPAPPVPVSSTKVNKFPPPPKFPQSSFPPPPMDDLPPPPPPPEIADLPPDFLPPPPPSFVSHGGESLPPPPPDPVASLPPPPPAFTSAGGAPPPPPPPPPPPAPAPAVNNPAGSVRKVAPPPPKRTTPQLAAPSGGDFMSELMNAMQKKRTQP</sequence>
<gene>
    <name type="primary">apbb1ip</name>
</gene>